<dbReference type="EMBL" id="CH954180">
    <property type="protein sequence ID" value="EDV47529.1"/>
    <property type="molecule type" value="Genomic_DNA"/>
</dbReference>
<dbReference type="EnsemblMetazoa" id="FBtr0137645">
    <property type="protein sequence ID" value="FBpp0136137"/>
    <property type="gene ID" value="FBgn0109815"/>
</dbReference>
<dbReference type="EnsemblMetazoa" id="XM_001978566.1">
    <property type="protein sequence ID" value="XP_001978602.1"/>
    <property type="gene ID" value="LOC6551563"/>
</dbReference>
<dbReference type="GeneID" id="6551563"/>
<dbReference type="KEGG" id="der:6551563"/>
<dbReference type="eggNOG" id="ENOG502QRB1">
    <property type="taxonomic scope" value="Eukaryota"/>
</dbReference>
<dbReference type="HOGENOM" id="CLU_477581_0_0_1"/>
<dbReference type="OrthoDB" id="7867651at2759"/>
<dbReference type="PhylomeDB" id="B3NY08"/>
<dbReference type="Proteomes" id="UP000008711">
    <property type="component" value="Unassembled WGS sequence"/>
</dbReference>
<dbReference type="InterPro" id="IPR006610">
    <property type="entry name" value="DM7"/>
</dbReference>
<dbReference type="SMART" id="SM00688">
    <property type="entry name" value="DM7"/>
    <property type="match status" value="2"/>
</dbReference>
<comment type="similarity">
    <text evidence="1">Belongs to the DM7 family.</text>
</comment>
<sequence>MLQVASGNREEGQVVELKKTKYLPYLFNLVMPKSFYHSHNRIVVARLYSNVHKHDKQAAEFFEGFQTPCFEVPASMFPGEAPLNKIVFMPPVMLPMGFEAGGVFGPGVLPRRSYPIDLTASGHKGQSPPLFVGLRRLYVQLPSEIESFLDKMGEFPATQDTLVYGMRRSNQLLKEEQAQELMLRNDLSLSMAYNLPAPPTPPSPYPYRHVPVQYNIYTPDLSNVLMMMPHQRKLTVAILSTVNNPHVPSVALATMGDEECPKFELPSDVFPICEGVNRPIFLPRRFLPKGFESGCVFKPGSLSELWFMGYMGRFSPPQPQHNCAITPPLFVGKISRVVLAFDLMKNIQMEYGAAQSSAQSEGSLNAVEPKKPNVPITKGFLVMETEHPTPPSGGYSLQSYQEGSAKGCVVKVEKGETQEMDEAHPTKEESKSEEEGEVQSGSQEEKYLSWFKVDSDIDLIAETMVDMGTAQMSLIDEEALPGVDGACVLNQLREVFEDRNEIRQNIDQLIHDHIYRMNRDRMLALRLPIRSYFRMYDKVDNQ</sequence>
<reference evidence="3" key="1">
    <citation type="journal article" date="2007" name="Nature">
        <title>Evolution of genes and genomes on the Drosophila phylogeny.</title>
        <authorList>
            <consortium name="Drosophila 12 genomes consortium"/>
        </authorList>
    </citation>
    <scope>NUCLEOTIDE SEQUENCE [LARGE SCALE GENOMIC DNA]</scope>
    <source>
        <strain evidence="3">Tucson 14021-0224.01</strain>
    </source>
</reference>
<keyword id="KW-0677">Repeat</keyword>
<protein>
    <recommendedName>
        <fullName>DM7 family protein GG17591</fullName>
    </recommendedName>
</protein>
<proteinExistence type="inferred from homology"/>
<feature type="chain" id="PRO_0000378612" description="DM7 family protein GG17591">
    <location>
        <begin position="1"/>
        <end position="542"/>
    </location>
</feature>
<feature type="region of interest" description="Disordered" evidence="2">
    <location>
        <begin position="415"/>
        <end position="443"/>
    </location>
</feature>
<feature type="compositionally biased region" description="Basic and acidic residues" evidence="2">
    <location>
        <begin position="415"/>
        <end position="430"/>
    </location>
</feature>
<accession>B3NY08</accession>
<name>DM7C_DROER</name>
<gene>
    <name type="ORF">GG17591</name>
</gene>
<evidence type="ECO:0000255" key="1"/>
<evidence type="ECO:0000256" key="2">
    <source>
        <dbReference type="SAM" id="MobiDB-lite"/>
    </source>
</evidence>
<evidence type="ECO:0000312" key="3">
    <source>
        <dbReference type="EMBL" id="EDV47529.1"/>
    </source>
</evidence>
<organism>
    <name type="scientific">Drosophila erecta</name>
    <name type="common">Fruit fly</name>
    <dbReference type="NCBI Taxonomy" id="7220"/>
    <lineage>
        <taxon>Eukaryota</taxon>
        <taxon>Metazoa</taxon>
        <taxon>Ecdysozoa</taxon>
        <taxon>Arthropoda</taxon>
        <taxon>Hexapoda</taxon>
        <taxon>Insecta</taxon>
        <taxon>Pterygota</taxon>
        <taxon>Neoptera</taxon>
        <taxon>Endopterygota</taxon>
        <taxon>Diptera</taxon>
        <taxon>Brachycera</taxon>
        <taxon>Muscomorpha</taxon>
        <taxon>Ephydroidea</taxon>
        <taxon>Drosophilidae</taxon>
        <taxon>Drosophila</taxon>
        <taxon>Sophophora</taxon>
    </lineage>
</organism>